<accession>Q2SZJ1</accession>
<gene>
    <name evidence="1" type="primary">rsmH</name>
    <name type="synonym">mraW</name>
    <name type="ordered locus">BTH_I1110</name>
</gene>
<reference key="1">
    <citation type="journal article" date="2005" name="BMC Genomics">
        <title>Bacterial genome adaptation to niches: divergence of the potential virulence genes in three Burkholderia species of different survival strategies.</title>
        <authorList>
            <person name="Kim H.S."/>
            <person name="Schell M.A."/>
            <person name="Yu Y."/>
            <person name="Ulrich R.L."/>
            <person name="Sarria S.H."/>
            <person name="Nierman W.C."/>
            <person name="DeShazer D."/>
        </authorList>
    </citation>
    <scope>NUCLEOTIDE SEQUENCE [LARGE SCALE GENOMIC DNA]</scope>
    <source>
        <strain>ATCC 700388 / DSM 13276 / CCUG 48851 / CIP 106301 / E264</strain>
    </source>
</reference>
<organism>
    <name type="scientific">Burkholderia thailandensis (strain ATCC 700388 / DSM 13276 / CCUG 48851 / CIP 106301 / E264)</name>
    <dbReference type="NCBI Taxonomy" id="271848"/>
    <lineage>
        <taxon>Bacteria</taxon>
        <taxon>Pseudomonadati</taxon>
        <taxon>Pseudomonadota</taxon>
        <taxon>Betaproteobacteria</taxon>
        <taxon>Burkholderiales</taxon>
        <taxon>Burkholderiaceae</taxon>
        <taxon>Burkholderia</taxon>
        <taxon>pseudomallei group</taxon>
    </lineage>
</organism>
<comment type="function">
    <text evidence="1">Specifically methylates the N4 position of cytidine in position 1402 (C1402) of 16S rRNA.</text>
</comment>
<comment type="catalytic activity">
    <reaction evidence="1">
        <text>cytidine(1402) in 16S rRNA + S-adenosyl-L-methionine = N(4)-methylcytidine(1402) in 16S rRNA + S-adenosyl-L-homocysteine + H(+)</text>
        <dbReference type="Rhea" id="RHEA:42928"/>
        <dbReference type="Rhea" id="RHEA-COMP:10286"/>
        <dbReference type="Rhea" id="RHEA-COMP:10287"/>
        <dbReference type="ChEBI" id="CHEBI:15378"/>
        <dbReference type="ChEBI" id="CHEBI:57856"/>
        <dbReference type="ChEBI" id="CHEBI:59789"/>
        <dbReference type="ChEBI" id="CHEBI:74506"/>
        <dbReference type="ChEBI" id="CHEBI:82748"/>
        <dbReference type="EC" id="2.1.1.199"/>
    </reaction>
</comment>
<comment type="subcellular location">
    <subcellularLocation>
        <location evidence="1">Cytoplasm</location>
    </subcellularLocation>
</comment>
<comment type="similarity">
    <text evidence="1">Belongs to the methyltransferase superfamily. RsmH family.</text>
</comment>
<evidence type="ECO:0000255" key="1">
    <source>
        <dbReference type="HAMAP-Rule" id="MF_01007"/>
    </source>
</evidence>
<sequence length="313" mass="34091">MGNELQHRTVLLDEAVDALVTRPDGVYVDGTFGRGGHSRAVLARLSDAGRLIAFDKDPRAIETASGIEDARFEIVHDSFAAMKGALDARGVGRVSGVLLDLGVSSPQVDDPERGFSFRANGPLDMRMDPTRGESAAEWLARASVQELTEVIRDYGEERFAFQIAKAIVARRAESDRLGPLDSTGELAQIVGHVVKTREKGKDPATRTFQAIRIHVNQELADLQVVLEAALSLLEQGGRLVVISFHSLEDRIVKRFLQTHASAPAVDRRLPIRAVDLPSPPLKLLGRMFPSDAEVAANPRARSAVMRIAERVAP</sequence>
<dbReference type="EC" id="2.1.1.199" evidence="1"/>
<dbReference type="EMBL" id="CP000086">
    <property type="protein sequence ID" value="ABC38123.1"/>
    <property type="molecule type" value="Genomic_DNA"/>
</dbReference>
<dbReference type="RefSeq" id="WP_009888758.1">
    <property type="nucleotide sequence ID" value="NZ_CP008785.1"/>
</dbReference>
<dbReference type="SMR" id="Q2SZJ1"/>
<dbReference type="GeneID" id="45120862"/>
<dbReference type="KEGG" id="bte:BTH_I1110"/>
<dbReference type="HOGENOM" id="CLU_038422_2_0_4"/>
<dbReference type="Proteomes" id="UP000001930">
    <property type="component" value="Chromosome I"/>
</dbReference>
<dbReference type="GO" id="GO:0005737">
    <property type="term" value="C:cytoplasm"/>
    <property type="evidence" value="ECO:0007669"/>
    <property type="project" value="UniProtKB-SubCell"/>
</dbReference>
<dbReference type="GO" id="GO:0071424">
    <property type="term" value="F:rRNA (cytosine-N4-)-methyltransferase activity"/>
    <property type="evidence" value="ECO:0007669"/>
    <property type="project" value="UniProtKB-UniRule"/>
</dbReference>
<dbReference type="GO" id="GO:0070475">
    <property type="term" value="P:rRNA base methylation"/>
    <property type="evidence" value="ECO:0007669"/>
    <property type="project" value="UniProtKB-UniRule"/>
</dbReference>
<dbReference type="Gene3D" id="1.10.150.170">
    <property type="entry name" value="Putative methyltransferase TM0872, insert domain"/>
    <property type="match status" value="1"/>
</dbReference>
<dbReference type="Gene3D" id="3.40.50.150">
    <property type="entry name" value="Vaccinia Virus protein VP39"/>
    <property type="match status" value="1"/>
</dbReference>
<dbReference type="HAMAP" id="MF_01007">
    <property type="entry name" value="16SrRNA_methyltr_H"/>
    <property type="match status" value="1"/>
</dbReference>
<dbReference type="InterPro" id="IPR002903">
    <property type="entry name" value="RsmH"/>
</dbReference>
<dbReference type="InterPro" id="IPR023397">
    <property type="entry name" value="SAM-dep_MeTrfase_MraW_recog"/>
</dbReference>
<dbReference type="InterPro" id="IPR029063">
    <property type="entry name" value="SAM-dependent_MTases_sf"/>
</dbReference>
<dbReference type="NCBIfam" id="TIGR00006">
    <property type="entry name" value="16S rRNA (cytosine(1402)-N(4))-methyltransferase RsmH"/>
    <property type="match status" value="1"/>
</dbReference>
<dbReference type="PANTHER" id="PTHR11265:SF0">
    <property type="entry name" value="12S RRNA N4-METHYLCYTIDINE METHYLTRANSFERASE"/>
    <property type="match status" value="1"/>
</dbReference>
<dbReference type="PANTHER" id="PTHR11265">
    <property type="entry name" value="S-ADENOSYL-METHYLTRANSFERASE MRAW"/>
    <property type="match status" value="1"/>
</dbReference>
<dbReference type="Pfam" id="PF01795">
    <property type="entry name" value="Methyltransf_5"/>
    <property type="match status" value="1"/>
</dbReference>
<dbReference type="PIRSF" id="PIRSF004486">
    <property type="entry name" value="MraW"/>
    <property type="match status" value="1"/>
</dbReference>
<dbReference type="SUPFAM" id="SSF81799">
    <property type="entry name" value="Putative methyltransferase TM0872, insert domain"/>
    <property type="match status" value="1"/>
</dbReference>
<dbReference type="SUPFAM" id="SSF53335">
    <property type="entry name" value="S-adenosyl-L-methionine-dependent methyltransferases"/>
    <property type="match status" value="1"/>
</dbReference>
<keyword id="KW-0963">Cytoplasm</keyword>
<keyword id="KW-0489">Methyltransferase</keyword>
<keyword id="KW-0698">rRNA processing</keyword>
<keyword id="KW-0949">S-adenosyl-L-methionine</keyword>
<keyword id="KW-0808">Transferase</keyword>
<protein>
    <recommendedName>
        <fullName evidence="1">Ribosomal RNA small subunit methyltransferase H</fullName>
        <ecNumber evidence="1">2.1.1.199</ecNumber>
    </recommendedName>
    <alternativeName>
        <fullName evidence="1">16S rRNA m(4)C1402 methyltransferase</fullName>
    </alternativeName>
    <alternativeName>
        <fullName evidence="1">rRNA (cytosine-N(4)-)-methyltransferase RsmH</fullName>
    </alternativeName>
</protein>
<feature type="chain" id="PRO_0000386780" description="Ribosomal RNA small subunit methyltransferase H">
    <location>
        <begin position="1"/>
        <end position="313"/>
    </location>
</feature>
<feature type="binding site" evidence="1">
    <location>
        <begin position="35"/>
        <end position="37"/>
    </location>
    <ligand>
        <name>S-adenosyl-L-methionine</name>
        <dbReference type="ChEBI" id="CHEBI:59789"/>
    </ligand>
</feature>
<feature type="binding site" evidence="1">
    <location>
        <position position="55"/>
    </location>
    <ligand>
        <name>S-adenosyl-L-methionine</name>
        <dbReference type="ChEBI" id="CHEBI:59789"/>
    </ligand>
</feature>
<feature type="binding site" evidence="1">
    <location>
        <position position="79"/>
    </location>
    <ligand>
        <name>S-adenosyl-L-methionine</name>
        <dbReference type="ChEBI" id="CHEBI:59789"/>
    </ligand>
</feature>
<feature type="binding site" evidence="1">
    <location>
        <position position="100"/>
    </location>
    <ligand>
        <name>S-adenosyl-L-methionine</name>
        <dbReference type="ChEBI" id="CHEBI:59789"/>
    </ligand>
</feature>
<feature type="binding site" evidence="1">
    <location>
        <position position="107"/>
    </location>
    <ligand>
        <name>S-adenosyl-L-methionine</name>
        <dbReference type="ChEBI" id="CHEBI:59789"/>
    </ligand>
</feature>
<name>RSMH_BURTA</name>
<proteinExistence type="inferred from homology"/>